<organism>
    <name type="scientific">Pseudomonas putida (strain ATCC 700007 / DSM 6899 / JCM 31910 / BCRC 17059 / LMG 24140 / F1)</name>
    <dbReference type="NCBI Taxonomy" id="351746"/>
    <lineage>
        <taxon>Bacteria</taxon>
        <taxon>Pseudomonadati</taxon>
        <taxon>Pseudomonadota</taxon>
        <taxon>Gammaproteobacteria</taxon>
        <taxon>Pseudomonadales</taxon>
        <taxon>Pseudomonadaceae</taxon>
        <taxon>Pseudomonas</taxon>
    </lineage>
</organism>
<comment type="function">
    <text evidence="1">One of the essential components for the initiation of protein synthesis. Stabilizes the binding of IF-2 and IF-3 on the 30S subunit to which N-formylmethionyl-tRNA(fMet) subsequently binds. Helps modulate mRNA selection, yielding the 30S pre-initiation complex (PIC). Upon addition of the 50S ribosomal subunit IF-1, IF-2 and IF-3 are released leaving the mature 70S translation initiation complex.</text>
</comment>
<comment type="subunit">
    <text evidence="1">Component of the 30S ribosomal translation pre-initiation complex which assembles on the 30S ribosome in the order IF-2 and IF-3, IF-1 and N-formylmethionyl-tRNA(fMet); mRNA recruitment can occur at any time during PIC assembly.</text>
</comment>
<comment type="subcellular location">
    <subcellularLocation>
        <location evidence="1">Cytoplasm</location>
    </subcellularLocation>
</comment>
<comment type="similarity">
    <text evidence="1">Belongs to the IF-1 family.</text>
</comment>
<feature type="chain" id="PRO_0000338891" description="Translation initiation factor IF-1">
    <location>
        <begin position="1"/>
        <end position="72"/>
    </location>
</feature>
<feature type="domain" description="S1-like" evidence="1">
    <location>
        <begin position="1"/>
        <end position="72"/>
    </location>
</feature>
<evidence type="ECO:0000255" key="1">
    <source>
        <dbReference type="HAMAP-Rule" id="MF_00075"/>
    </source>
</evidence>
<proteinExistence type="inferred from homology"/>
<sequence length="72" mass="8303">MSKEDSFEMEGTVVDTLPNTMFRVELENGHVVTAHISGKMRKNYIRILTGDKVRVELTPYDLSKGRITYRAR</sequence>
<reference key="1">
    <citation type="submission" date="2007-05" db="EMBL/GenBank/DDBJ databases">
        <title>Complete sequence of Pseudomonas putida F1.</title>
        <authorList>
            <consortium name="US DOE Joint Genome Institute"/>
            <person name="Copeland A."/>
            <person name="Lucas S."/>
            <person name="Lapidus A."/>
            <person name="Barry K."/>
            <person name="Detter J.C."/>
            <person name="Glavina del Rio T."/>
            <person name="Hammon N."/>
            <person name="Israni S."/>
            <person name="Dalin E."/>
            <person name="Tice H."/>
            <person name="Pitluck S."/>
            <person name="Chain P."/>
            <person name="Malfatti S."/>
            <person name="Shin M."/>
            <person name="Vergez L."/>
            <person name="Schmutz J."/>
            <person name="Larimer F."/>
            <person name="Land M."/>
            <person name="Hauser L."/>
            <person name="Kyrpides N."/>
            <person name="Lykidis A."/>
            <person name="Parales R."/>
            <person name="Richardson P."/>
        </authorList>
    </citation>
    <scope>NUCLEOTIDE SEQUENCE [LARGE SCALE GENOMIC DNA]</scope>
    <source>
        <strain>ATCC 700007 / DSM 6899 / JCM 31910 / BCRC 17059 / LMG 24140 / F1</strain>
    </source>
</reference>
<dbReference type="EMBL" id="CP000712">
    <property type="protein sequence ID" value="ABQ77979.1"/>
    <property type="molecule type" value="Genomic_DNA"/>
</dbReference>
<dbReference type="SMR" id="A5W1G9"/>
<dbReference type="KEGG" id="ppf:Pput_1826"/>
<dbReference type="eggNOG" id="COG0361">
    <property type="taxonomic scope" value="Bacteria"/>
</dbReference>
<dbReference type="HOGENOM" id="CLU_151267_1_0_6"/>
<dbReference type="GO" id="GO:0005829">
    <property type="term" value="C:cytosol"/>
    <property type="evidence" value="ECO:0007669"/>
    <property type="project" value="TreeGrafter"/>
</dbReference>
<dbReference type="GO" id="GO:0043022">
    <property type="term" value="F:ribosome binding"/>
    <property type="evidence" value="ECO:0007669"/>
    <property type="project" value="UniProtKB-UniRule"/>
</dbReference>
<dbReference type="GO" id="GO:0019843">
    <property type="term" value="F:rRNA binding"/>
    <property type="evidence" value="ECO:0007669"/>
    <property type="project" value="UniProtKB-UniRule"/>
</dbReference>
<dbReference type="GO" id="GO:0003743">
    <property type="term" value="F:translation initiation factor activity"/>
    <property type="evidence" value="ECO:0007669"/>
    <property type="project" value="UniProtKB-UniRule"/>
</dbReference>
<dbReference type="CDD" id="cd04451">
    <property type="entry name" value="S1_IF1"/>
    <property type="match status" value="1"/>
</dbReference>
<dbReference type="FunFam" id="2.40.50.140:FF:000002">
    <property type="entry name" value="Translation initiation factor IF-1"/>
    <property type="match status" value="1"/>
</dbReference>
<dbReference type="Gene3D" id="2.40.50.140">
    <property type="entry name" value="Nucleic acid-binding proteins"/>
    <property type="match status" value="1"/>
</dbReference>
<dbReference type="HAMAP" id="MF_00075">
    <property type="entry name" value="IF_1"/>
    <property type="match status" value="1"/>
</dbReference>
<dbReference type="InterPro" id="IPR012340">
    <property type="entry name" value="NA-bd_OB-fold"/>
</dbReference>
<dbReference type="InterPro" id="IPR006196">
    <property type="entry name" value="RNA-binding_domain_S1_IF1"/>
</dbReference>
<dbReference type="InterPro" id="IPR003029">
    <property type="entry name" value="S1_domain"/>
</dbReference>
<dbReference type="InterPro" id="IPR004368">
    <property type="entry name" value="TIF_IF1"/>
</dbReference>
<dbReference type="NCBIfam" id="TIGR00008">
    <property type="entry name" value="infA"/>
    <property type="match status" value="1"/>
</dbReference>
<dbReference type="PANTHER" id="PTHR33370">
    <property type="entry name" value="TRANSLATION INITIATION FACTOR IF-1, CHLOROPLASTIC"/>
    <property type="match status" value="1"/>
</dbReference>
<dbReference type="PANTHER" id="PTHR33370:SF1">
    <property type="entry name" value="TRANSLATION INITIATION FACTOR IF-1, CHLOROPLASTIC"/>
    <property type="match status" value="1"/>
</dbReference>
<dbReference type="Pfam" id="PF01176">
    <property type="entry name" value="eIF-1a"/>
    <property type="match status" value="1"/>
</dbReference>
<dbReference type="SMART" id="SM00316">
    <property type="entry name" value="S1"/>
    <property type="match status" value="1"/>
</dbReference>
<dbReference type="SUPFAM" id="SSF50249">
    <property type="entry name" value="Nucleic acid-binding proteins"/>
    <property type="match status" value="1"/>
</dbReference>
<dbReference type="PROSITE" id="PS50832">
    <property type="entry name" value="S1_IF1_TYPE"/>
    <property type="match status" value="1"/>
</dbReference>
<accession>A5W1G9</accession>
<gene>
    <name evidence="1" type="primary">infA</name>
    <name type="ordered locus">Pput_1826</name>
</gene>
<keyword id="KW-0963">Cytoplasm</keyword>
<keyword id="KW-0396">Initiation factor</keyword>
<keyword id="KW-0648">Protein biosynthesis</keyword>
<keyword id="KW-0694">RNA-binding</keyword>
<keyword id="KW-0699">rRNA-binding</keyword>
<name>IF1_PSEP1</name>
<protein>
    <recommendedName>
        <fullName evidence="1">Translation initiation factor IF-1</fullName>
    </recommendedName>
</protein>